<gene>
    <name type="primary">CBF1</name>
    <name type="synonym">CEP1</name>
    <name type="synonym">CP1</name>
    <name type="synonym">CPF1</name>
    <name type="ordered locus">YJR060W</name>
    <name type="ORF">J1730</name>
</gene>
<protein>
    <recommendedName>
        <fullName>Centromere-binding protein 1</fullName>
        <shortName>CBP-1</shortName>
    </recommendedName>
    <alternativeName>
        <fullName>Centromere promoter factor 1</fullName>
    </alternativeName>
    <alternativeName>
        <fullName>Centromere-binding factor 1</fullName>
    </alternativeName>
</protein>
<reference key="1">
    <citation type="journal article" date="1990" name="Cell">
        <title>Yeast centromere binding protein CBF1, of the helix-loop-helix protein family, is required for chromosome stability and methionine prototrophy.</title>
        <authorList>
            <person name="Cai M."/>
            <person name="Davis R.W."/>
        </authorList>
    </citation>
    <scope>NUCLEOTIDE SEQUENCE [GENOMIC DNA]</scope>
    <scope>PROTEIN SEQUENCE OF 214-231</scope>
    <scope>SUBCELLULAR LOCATION</scope>
</reference>
<reference key="2">
    <citation type="journal article" date="1990" name="EMBO J.">
        <title>CPF1, a yeast protein which functions in centromeres and promoters.</title>
        <authorList>
            <person name="Mellor J."/>
            <person name="Jiang W."/>
            <person name="Funk M."/>
            <person name="Rathjen J."/>
            <person name="Barnes C.A."/>
            <person name="Hinz T."/>
            <person name="Hegemann J.H."/>
            <person name="Philippsen P."/>
        </authorList>
    </citation>
    <scope>NUCLEOTIDE SEQUENCE [GENOMIC DNA]</scope>
    <scope>PARTIAL PROTEIN SEQUENCE</scope>
    <source>
        <strain>ATCC 44827 / SKQ2N</strain>
    </source>
</reference>
<reference key="3">
    <citation type="journal article" date="1990" name="Mol. Cell. Biol.">
        <title>Isolation of the gene encoding the Saccharomyces cerevisiae centromere-binding protein CP1.</title>
        <authorList>
            <person name="Baker R.E."/>
            <person name="Masison D.C."/>
        </authorList>
    </citation>
    <scope>NUCLEOTIDE SEQUENCE [GENOMIC DNA]</scope>
</reference>
<reference key="4">
    <citation type="journal article" date="1996" name="Yeast">
        <title>Analysis of a 62 kb DNA sequence of chromosome X reveals 36 open reading frames and a gene cluster with a counterpart on chromosome XI.</title>
        <authorList>
            <person name="Huang M.-E."/>
            <person name="Manus V."/>
            <person name="Chuat J.-C."/>
            <person name="Galibert F."/>
        </authorList>
    </citation>
    <scope>NUCLEOTIDE SEQUENCE [GENOMIC DNA]</scope>
    <source>
        <strain>ATCC 204508 / S288c</strain>
    </source>
</reference>
<reference key="5">
    <citation type="journal article" date="1996" name="EMBO J.">
        <title>Complete nucleotide sequence of Saccharomyces cerevisiae chromosome X.</title>
        <authorList>
            <person name="Galibert F."/>
            <person name="Alexandraki D."/>
            <person name="Baur A."/>
            <person name="Boles E."/>
            <person name="Chalwatzis N."/>
            <person name="Chuat J.-C."/>
            <person name="Coster F."/>
            <person name="Cziepluch C."/>
            <person name="de Haan M."/>
            <person name="Domdey H."/>
            <person name="Durand P."/>
            <person name="Entian K.-D."/>
            <person name="Gatius M."/>
            <person name="Goffeau A."/>
            <person name="Grivell L.A."/>
            <person name="Hennemann A."/>
            <person name="Herbert C.J."/>
            <person name="Heumann K."/>
            <person name="Hilger F."/>
            <person name="Hollenberg C.P."/>
            <person name="Huang M.-E."/>
            <person name="Jacq C."/>
            <person name="Jauniaux J.-C."/>
            <person name="Katsoulou C."/>
            <person name="Kirchrath L."/>
            <person name="Kleine K."/>
            <person name="Kordes E."/>
            <person name="Koetter P."/>
            <person name="Liebl S."/>
            <person name="Louis E.J."/>
            <person name="Manus V."/>
            <person name="Mewes H.-W."/>
            <person name="Miosga T."/>
            <person name="Obermaier B."/>
            <person name="Perea J."/>
            <person name="Pohl T.M."/>
            <person name="Portetelle D."/>
            <person name="Pujol A."/>
            <person name="Purnelle B."/>
            <person name="Ramezani Rad M."/>
            <person name="Rasmussen S.W."/>
            <person name="Rose M."/>
            <person name="Rossau R."/>
            <person name="Schaaff-Gerstenschlaeger I."/>
            <person name="Smits P.H.M."/>
            <person name="Scarcez T."/>
            <person name="Soriano N."/>
            <person name="To Van D."/>
            <person name="Tzermia M."/>
            <person name="Van Broekhoven A."/>
            <person name="Vandenbol M."/>
            <person name="Wedler H."/>
            <person name="von Wettstein D."/>
            <person name="Wambutt R."/>
            <person name="Zagulski M."/>
            <person name="Zollner A."/>
            <person name="Karpfinger-Hartl L."/>
        </authorList>
    </citation>
    <scope>NUCLEOTIDE SEQUENCE [LARGE SCALE GENOMIC DNA]</scope>
    <source>
        <strain>ATCC 204508 / S288c</strain>
    </source>
</reference>
<reference key="6">
    <citation type="journal article" date="2014" name="G3 (Bethesda)">
        <title>The reference genome sequence of Saccharomyces cerevisiae: Then and now.</title>
        <authorList>
            <person name="Engel S.R."/>
            <person name="Dietrich F.S."/>
            <person name="Fisk D.G."/>
            <person name="Binkley G."/>
            <person name="Balakrishnan R."/>
            <person name="Costanzo M.C."/>
            <person name="Dwight S.S."/>
            <person name="Hitz B.C."/>
            <person name="Karra K."/>
            <person name="Nash R.S."/>
            <person name="Weng S."/>
            <person name="Wong E.D."/>
            <person name="Lloyd P."/>
            <person name="Skrzypek M.S."/>
            <person name="Miyasato S.R."/>
            <person name="Simison M."/>
            <person name="Cherry J.M."/>
        </authorList>
    </citation>
    <scope>GENOME REANNOTATION</scope>
    <source>
        <strain>ATCC 204508 / S288c</strain>
    </source>
</reference>
<reference key="7">
    <citation type="journal article" date="2007" name="Genome Res.">
        <title>Approaching a complete repository of sequence-verified protein-encoding clones for Saccharomyces cerevisiae.</title>
        <authorList>
            <person name="Hu Y."/>
            <person name="Rolfs A."/>
            <person name="Bhullar B."/>
            <person name="Murthy T.V.S."/>
            <person name="Zhu C."/>
            <person name="Berger M.F."/>
            <person name="Camargo A.A."/>
            <person name="Kelley F."/>
            <person name="McCarron S."/>
            <person name="Jepson D."/>
            <person name="Richardson A."/>
            <person name="Raphael J."/>
            <person name="Moreira D."/>
            <person name="Taycher E."/>
            <person name="Zuo D."/>
            <person name="Mohr S."/>
            <person name="Kane M.F."/>
            <person name="Williamson J."/>
            <person name="Simpson A.J.G."/>
            <person name="Bulyk M.L."/>
            <person name="Harlow E."/>
            <person name="Marsischky G."/>
            <person name="Kolodner R.D."/>
            <person name="LaBaer J."/>
        </authorList>
    </citation>
    <scope>NUCLEOTIDE SEQUENCE [GENOMIC DNA]</scope>
    <source>
        <strain>ATCC 204508 / S288c</strain>
    </source>
</reference>
<reference key="8">
    <citation type="journal article" date="1992" name="Mol. Cell. Biol.">
        <title>MET4, a leucine zipper protein, and centromere-binding factor 1 are both required for transcriptional activation of sulfur metabolism in Saccharomyces cerevisiae.</title>
        <authorList>
            <person name="Thomas D."/>
            <person name="Jacquemin I."/>
            <person name="Surdin-Kerjan Y."/>
        </authorList>
    </citation>
    <scope>FUNCTION</scope>
</reference>
<reference key="9">
    <citation type="journal article" date="1996" name="EMBO J.">
        <title>A heteromeric complex containing the centromere binding factor 1 and two basic leucine zipper factors, Met4 and Met28, mediates the transcription activation of yeast sulfur metabolism.</title>
        <authorList>
            <person name="Kuras L."/>
            <person name="Cherest H."/>
            <person name="Surdin-Kerjan Y."/>
            <person name="Thomas D."/>
        </authorList>
    </citation>
    <scope>FUNCTION</scope>
    <scope>INTERACTION WITH MET4</scope>
</reference>
<reference key="10">
    <citation type="journal article" date="1997" name="EMBO J.">
        <title>Assembly of a bZIP-bHLH transcription activation complex: formation of the yeast Cbf1-Met4-Met28 complex is regulated through Met28 stimulation of Cbf1 DNA binding.</title>
        <authorList>
            <person name="Kuras L."/>
            <person name="Barbey R."/>
            <person name="Thomas D."/>
        </authorList>
    </citation>
    <scope>SUBUNIT</scope>
</reference>
<reference key="11">
    <citation type="journal article" date="2003" name="Nature">
        <title>Global analysis of protein localization in budding yeast.</title>
        <authorList>
            <person name="Huh W.-K."/>
            <person name="Falvo J.V."/>
            <person name="Gerke L.C."/>
            <person name="Carroll A.S."/>
            <person name="Howson R.W."/>
            <person name="Weissman J.S."/>
            <person name="O'Shea E.K."/>
        </authorList>
    </citation>
    <scope>SUBCELLULAR LOCATION [LARGE SCALE ANALYSIS]</scope>
</reference>
<reference key="12">
    <citation type="journal article" date="2003" name="Nature">
        <title>Global analysis of protein expression in yeast.</title>
        <authorList>
            <person name="Ghaemmaghami S."/>
            <person name="Huh W.-K."/>
            <person name="Bower K."/>
            <person name="Howson R.W."/>
            <person name="Belle A."/>
            <person name="Dephoure N."/>
            <person name="O'Shea E.K."/>
            <person name="Weissman J.S."/>
        </authorList>
    </citation>
    <scope>LEVEL OF PROTEIN EXPRESSION [LARGE SCALE ANALYSIS]</scope>
</reference>
<reference key="13">
    <citation type="journal article" date="2003" name="Proc. Natl. Acad. Sci. U.S.A.">
        <title>The proteome of Saccharomyces cerevisiae mitochondria.</title>
        <authorList>
            <person name="Sickmann A."/>
            <person name="Reinders J."/>
            <person name="Wagner Y."/>
            <person name="Joppich C."/>
            <person name="Zahedi R.P."/>
            <person name="Meyer H.E."/>
            <person name="Schoenfisch B."/>
            <person name="Perschil I."/>
            <person name="Chacinska A."/>
            <person name="Guiard B."/>
            <person name="Rehling P."/>
            <person name="Pfanner N."/>
            <person name="Meisinger C."/>
        </authorList>
    </citation>
    <scope>SUBCELLULAR LOCATION [LARGE SCALE ANALYSIS]</scope>
    <source>
        <strain>ATCC 76625 / YPH499</strain>
    </source>
</reference>
<reference key="14">
    <citation type="journal article" date="2007" name="J. Proteome Res.">
        <title>Large-scale phosphorylation analysis of alpha-factor-arrested Saccharomyces cerevisiae.</title>
        <authorList>
            <person name="Li X."/>
            <person name="Gerber S.A."/>
            <person name="Rudner A.D."/>
            <person name="Beausoleil S.A."/>
            <person name="Haas W."/>
            <person name="Villen J."/>
            <person name="Elias J.E."/>
            <person name="Gygi S.P."/>
        </authorList>
    </citation>
    <scope>PHOSPHORYLATION [LARGE SCALE ANALYSIS] AT THR-138</scope>
    <scope>IDENTIFICATION BY MASS SPECTROMETRY [LARGE SCALE ANALYSIS]</scope>
    <source>
        <strain>ADR376</strain>
    </source>
</reference>
<reference key="15">
    <citation type="journal article" date="2008" name="Mol. Cell. Proteomics">
        <title>A multidimensional chromatography technology for in-depth phosphoproteome analysis.</title>
        <authorList>
            <person name="Albuquerque C.P."/>
            <person name="Smolka M.B."/>
            <person name="Payne S.H."/>
            <person name="Bafna V."/>
            <person name="Eng J."/>
            <person name="Zhou H."/>
        </authorList>
    </citation>
    <scope>PHOSPHORYLATION [LARGE SCALE ANALYSIS] AT SER-45; SER-48 AND SER-84</scope>
    <scope>IDENTIFICATION BY MASS SPECTROMETRY [LARGE SCALE ANALYSIS]</scope>
</reference>
<reference key="16">
    <citation type="journal article" date="2009" name="Science">
        <title>Global analysis of Cdk1 substrate phosphorylation sites provides insights into evolution.</title>
        <authorList>
            <person name="Holt L.J."/>
            <person name="Tuch B.B."/>
            <person name="Villen J."/>
            <person name="Johnson A.D."/>
            <person name="Gygi S.P."/>
            <person name="Morgan D.O."/>
        </authorList>
    </citation>
    <scope>PHOSPHORYLATION [LARGE SCALE ANALYSIS] AT SER-45; SER-48 AND THR-138</scope>
    <scope>IDENTIFICATION BY MASS SPECTROMETRY [LARGE SCALE ANALYSIS]</scope>
</reference>
<reference key="17">
    <citation type="journal article" date="2012" name="Proc. Natl. Acad. Sci. U.S.A.">
        <title>N-terminal acetylome analyses and functional insights of the N-terminal acetyltransferase NatB.</title>
        <authorList>
            <person name="Van Damme P."/>
            <person name="Lasa M."/>
            <person name="Polevoda B."/>
            <person name="Gazquez C."/>
            <person name="Elosegui-Artola A."/>
            <person name="Kim D.S."/>
            <person name="De Juan-Pardo E."/>
            <person name="Demeyer K."/>
            <person name="Hole K."/>
            <person name="Larrea E."/>
            <person name="Timmerman E."/>
            <person name="Prieto J."/>
            <person name="Arnesen T."/>
            <person name="Sherman F."/>
            <person name="Gevaert K."/>
            <person name="Aldabe R."/>
        </authorList>
    </citation>
    <scope>ACETYLATION [LARGE SCALE ANALYSIS] AT MET-1</scope>
    <scope>IDENTIFICATION BY MASS SPECTROMETRY [LARGE SCALE ANALYSIS]</scope>
</reference>
<evidence type="ECO:0000255" key="1">
    <source>
        <dbReference type="PROSITE-ProRule" id="PRU00981"/>
    </source>
</evidence>
<evidence type="ECO:0000256" key="2">
    <source>
        <dbReference type="SAM" id="MobiDB-lite"/>
    </source>
</evidence>
<evidence type="ECO:0000269" key="3">
    <source>
    </source>
</evidence>
<evidence type="ECO:0000269" key="4">
    <source>
    </source>
</evidence>
<evidence type="ECO:0000269" key="5">
    <source>
    </source>
</evidence>
<evidence type="ECO:0000269" key="6">
    <source>
    </source>
</evidence>
<evidence type="ECO:0000269" key="7">
    <source>
    </source>
</evidence>
<evidence type="ECO:0000269" key="8">
    <source>
    </source>
</evidence>
<evidence type="ECO:0000269" key="9">
    <source>
    </source>
</evidence>
<evidence type="ECO:0000305" key="10"/>
<evidence type="ECO:0007744" key="11">
    <source>
    </source>
</evidence>
<evidence type="ECO:0007744" key="12">
    <source>
    </source>
</evidence>
<evidence type="ECO:0007744" key="13">
    <source>
    </source>
</evidence>
<evidence type="ECO:0007744" key="14">
    <source>
    </source>
</evidence>
<evidence type="ECO:0007829" key="15">
    <source>
        <dbReference type="PDB" id="7SSA"/>
    </source>
</evidence>
<evidence type="ECO:0007829" key="16">
    <source>
        <dbReference type="PDB" id="8OVW"/>
    </source>
</evidence>
<proteinExistence type="evidence at protein level"/>
<name>CBF1_YEAST</name>
<dbReference type="EMBL" id="M33620">
    <property type="protein sequence ID" value="AAA34490.1"/>
    <property type="molecule type" value="Genomic_DNA"/>
</dbReference>
<dbReference type="EMBL" id="X52137">
    <property type="protein sequence ID" value="CAA36382.1"/>
    <property type="molecule type" value="Genomic_DNA"/>
</dbReference>
<dbReference type="EMBL" id="M34070">
    <property type="protein sequence ID" value="AAA34524.1"/>
    <property type="molecule type" value="Genomic_DNA"/>
</dbReference>
<dbReference type="EMBL" id="L47993">
    <property type="protein sequence ID" value="AAB39286.1"/>
    <property type="molecule type" value="Genomic_DNA"/>
</dbReference>
<dbReference type="EMBL" id="Z49560">
    <property type="protein sequence ID" value="CAA89588.1"/>
    <property type="molecule type" value="Genomic_DNA"/>
</dbReference>
<dbReference type="EMBL" id="AY557919">
    <property type="protein sequence ID" value="AAS56245.1"/>
    <property type="molecule type" value="Genomic_DNA"/>
</dbReference>
<dbReference type="EMBL" id="BK006943">
    <property type="protein sequence ID" value="DAA08847.1"/>
    <property type="molecule type" value="Genomic_DNA"/>
</dbReference>
<dbReference type="PIR" id="S57079">
    <property type="entry name" value="JSBYP1"/>
</dbReference>
<dbReference type="RefSeq" id="NP_012594.1">
    <property type="nucleotide sequence ID" value="NM_001181718.1"/>
</dbReference>
<dbReference type="PDB" id="7SSA">
    <property type="method" value="EM"/>
    <property type="resolution" value="3.20 A"/>
    <property type="chains" value="K/L=2-351"/>
</dbReference>
<dbReference type="PDB" id="8OVW">
    <property type="method" value="EM"/>
    <property type="resolution" value="3.40 A"/>
    <property type="chains" value="A/B=1-351"/>
</dbReference>
<dbReference type="PDB" id="8OW0">
    <property type="method" value="EM"/>
    <property type="resolution" value="3.40 A"/>
    <property type="chains" value="A/B=1-351"/>
</dbReference>
<dbReference type="PDB" id="8OW1">
    <property type="method" value="EM"/>
    <property type="resolution" value="3.70 A"/>
    <property type="chains" value="A/B=1-351"/>
</dbReference>
<dbReference type="PDBsum" id="7SSA"/>
<dbReference type="PDBsum" id="8OVW"/>
<dbReference type="PDBsum" id="8OW0"/>
<dbReference type="PDBsum" id="8OW1"/>
<dbReference type="EMDB" id="EMD-17224"/>
<dbReference type="EMDB" id="EMD-17226"/>
<dbReference type="EMDB" id="EMD-17227"/>
<dbReference type="EMDB" id="EMD-25406"/>
<dbReference type="SMR" id="P17106"/>
<dbReference type="BioGRID" id="33817">
    <property type="interactions" value="562"/>
</dbReference>
<dbReference type="ComplexPortal" id="CPX-1016">
    <property type="entry name" value="CBF1-MET4-MET28 sulfur metabolism transcription factor complex"/>
</dbReference>
<dbReference type="DIP" id="DIP-2239N"/>
<dbReference type="FunCoup" id="P17106">
    <property type="interactions" value="4912"/>
</dbReference>
<dbReference type="IntAct" id="P17106">
    <property type="interactions" value="4"/>
</dbReference>
<dbReference type="MINT" id="P17106"/>
<dbReference type="STRING" id="4932.YJR060W"/>
<dbReference type="iPTMnet" id="P17106"/>
<dbReference type="PaxDb" id="4932-YJR060W"/>
<dbReference type="PeptideAtlas" id="P17106"/>
<dbReference type="EnsemblFungi" id="YJR060W_mRNA">
    <property type="protein sequence ID" value="YJR060W"/>
    <property type="gene ID" value="YJR060W"/>
</dbReference>
<dbReference type="GeneID" id="853523"/>
<dbReference type="KEGG" id="sce:YJR060W"/>
<dbReference type="AGR" id="SGD:S000003821"/>
<dbReference type="SGD" id="S000003821">
    <property type="gene designation" value="CBF1"/>
</dbReference>
<dbReference type="VEuPathDB" id="FungiDB:YJR060W"/>
<dbReference type="eggNOG" id="KOG1318">
    <property type="taxonomic scope" value="Eukaryota"/>
</dbReference>
<dbReference type="HOGENOM" id="CLU_046871_0_0_1"/>
<dbReference type="InParanoid" id="P17106"/>
<dbReference type="OrthoDB" id="71302at2759"/>
<dbReference type="BioCyc" id="YEAST:G3O-31693-MONOMER"/>
<dbReference type="BioGRID-ORCS" id="853523">
    <property type="hits" value="10 hits in 13 CRISPR screens"/>
</dbReference>
<dbReference type="PRO" id="PR:P17106"/>
<dbReference type="Proteomes" id="UP000002311">
    <property type="component" value="Chromosome X"/>
</dbReference>
<dbReference type="RNAct" id="P17106">
    <property type="molecule type" value="protein"/>
</dbReference>
<dbReference type="GO" id="GO:0089713">
    <property type="term" value="C:Cbf1-Met4-Met28 complex"/>
    <property type="evidence" value="ECO:0000314"/>
    <property type="project" value="SGD"/>
</dbReference>
<dbReference type="GO" id="GO:0000775">
    <property type="term" value="C:chromosome, centromeric region"/>
    <property type="evidence" value="ECO:0000314"/>
    <property type="project" value="SGD"/>
</dbReference>
<dbReference type="GO" id="GO:0000776">
    <property type="term" value="C:kinetochore"/>
    <property type="evidence" value="ECO:0000353"/>
    <property type="project" value="SGD"/>
</dbReference>
<dbReference type="GO" id="GO:0005739">
    <property type="term" value="C:mitochondrion"/>
    <property type="evidence" value="ECO:0007005"/>
    <property type="project" value="SGD"/>
</dbReference>
<dbReference type="GO" id="GO:0005634">
    <property type="term" value="C:nucleus"/>
    <property type="evidence" value="ECO:0007005"/>
    <property type="project" value="SGD"/>
</dbReference>
<dbReference type="GO" id="GO:0019237">
    <property type="term" value="F:centromeric DNA binding"/>
    <property type="evidence" value="ECO:0000314"/>
    <property type="project" value="SGD"/>
</dbReference>
<dbReference type="GO" id="GO:0001228">
    <property type="term" value="F:DNA-binding transcription activator activity, RNA polymerase II-specific"/>
    <property type="evidence" value="ECO:0000314"/>
    <property type="project" value="SGD"/>
</dbReference>
<dbReference type="GO" id="GO:0003700">
    <property type="term" value="F:DNA-binding transcription factor activity"/>
    <property type="evidence" value="ECO:0000318"/>
    <property type="project" value="GO_Central"/>
</dbReference>
<dbReference type="GO" id="GO:0001227">
    <property type="term" value="F:DNA-binding transcription repressor activity, RNA polymerase II-specific"/>
    <property type="evidence" value="ECO:0000314"/>
    <property type="project" value="SGD"/>
</dbReference>
<dbReference type="GO" id="GO:0046983">
    <property type="term" value="F:protein dimerization activity"/>
    <property type="evidence" value="ECO:0007669"/>
    <property type="project" value="InterPro"/>
</dbReference>
<dbReference type="GO" id="GO:0000978">
    <property type="term" value="F:RNA polymerase II cis-regulatory region sequence-specific DNA binding"/>
    <property type="evidence" value="ECO:0000314"/>
    <property type="project" value="SGD"/>
</dbReference>
<dbReference type="GO" id="GO:0061629">
    <property type="term" value="F:RNA polymerase II-specific DNA-binding transcription factor binding"/>
    <property type="evidence" value="ECO:0000314"/>
    <property type="project" value="SGD"/>
</dbReference>
<dbReference type="GO" id="GO:0061431">
    <property type="term" value="P:cellular response to methionine"/>
    <property type="evidence" value="ECO:0000315"/>
    <property type="project" value="SGD"/>
</dbReference>
<dbReference type="GO" id="GO:0006338">
    <property type="term" value="P:chromatin remodeling"/>
    <property type="evidence" value="ECO:0000314"/>
    <property type="project" value="SGD"/>
</dbReference>
<dbReference type="GO" id="GO:0007059">
    <property type="term" value="P:chromosome segregation"/>
    <property type="evidence" value="ECO:0000315"/>
    <property type="project" value="SGD"/>
</dbReference>
<dbReference type="GO" id="GO:1900060">
    <property type="term" value="P:negative regulation of ceramide biosynthetic process"/>
    <property type="evidence" value="ECO:0000315"/>
    <property type="project" value="SGD"/>
</dbReference>
<dbReference type="GO" id="GO:0000122">
    <property type="term" value="P:negative regulation of transcription by RNA polymerase II"/>
    <property type="evidence" value="ECO:0000315"/>
    <property type="project" value="SGD"/>
</dbReference>
<dbReference type="GO" id="GO:1900090">
    <property type="term" value="P:positive regulation of inositol biosynthetic process"/>
    <property type="evidence" value="ECO:0000315"/>
    <property type="project" value="SGD"/>
</dbReference>
<dbReference type="GO" id="GO:1900059">
    <property type="term" value="P:positive regulation of sulfate assimilation"/>
    <property type="evidence" value="ECO:0000315"/>
    <property type="project" value="SGD"/>
</dbReference>
<dbReference type="GO" id="GO:0045944">
    <property type="term" value="P:positive regulation of transcription by RNA polymerase II"/>
    <property type="evidence" value="ECO:0000315"/>
    <property type="project" value="SGD"/>
</dbReference>
<dbReference type="GO" id="GO:0042762">
    <property type="term" value="P:regulation of sulfur metabolic process"/>
    <property type="evidence" value="ECO:0000303"/>
    <property type="project" value="ComplexPortal"/>
</dbReference>
<dbReference type="GO" id="GO:0006357">
    <property type="term" value="P:regulation of transcription by RNA polymerase II"/>
    <property type="evidence" value="ECO:0000315"/>
    <property type="project" value="SGD"/>
</dbReference>
<dbReference type="CDD" id="cd11398">
    <property type="entry name" value="bHLHzip_scCBP1"/>
    <property type="match status" value="1"/>
</dbReference>
<dbReference type="Gene3D" id="4.10.280.10">
    <property type="entry name" value="Helix-loop-helix DNA-binding domain"/>
    <property type="match status" value="1"/>
</dbReference>
<dbReference type="InterPro" id="IPR011598">
    <property type="entry name" value="bHLH_dom"/>
</dbReference>
<dbReference type="InterPro" id="IPR047206">
    <property type="entry name" value="bHLHzip_scCBP1-like"/>
</dbReference>
<dbReference type="InterPro" id="IPR036638">
    <property type="entry name" value="HLH_DNA-bd_sf"/>
</dbReference>
<dbReference type="PANTHER" id="PTHR47787">
    <property type="entry name" value="CENTROMERE-BINDING PROTEIN 1"/>
    <property type="match status" value="1"/>
</dbReference>
<dbReference type="PANTHER" id="PTHR47787:SF1">
    <property type="entry name" value="CENTROMERE-BINDING PROTEIN 1"/>
    <property type="match status" value="1"/>
</dbReference>
<dbReference type="Pfam" id="PF00010">
    <property type="entry name" value="HLH"/>
    <property type="match status" value="1"/>
</dbReference>
<dbReference type="SMART" id="SM00353">
    <property type="entry name" value="HLH"/>
    <property type="match status" value="1"/>
</dbReference>
<dbReference type="SUPFAM" id="SSF47459">
    <property type="entry name" value="HLH, helix-loop-helix DNA-binding domain"/>
    <property type="match status" value="1"/>
</dbReference>
<dbReference type="PROSITE" id="PS50888">
    <property type="entry name" value="BHLH"/>
    <property type="match status" value="1"/>
</dbReference>
<sequence>MNSLANNNKLSTEDEEIHSARKRGYNEEQNYSEARKKQRDQGLLSQESNDGNIDSALLSEGATLKGTQSQYESGLTSNKDEKGSDDEDASVAEAAVAATVNYTDLIQGQEDSSDAHTSNQTNANGEHKDSLNGERAITPSNEGVKPNTSLEGMTSSPMESTQQSKNDMLIPLAEHDRGPEHQQDDEDNDDADIDLKKDISMQPGRRGRKPTTLATTDEWKKQRKDSHKEVERRRRENINTAINVLSDLLPVRESSKAAILACAAEYIQKLKETDEANIEKWTLQKLLSEQNASQLASANEKLQEELGNAYKEIEYMKRVLRKEGIEYEDMHTHKKQENERKSTRSDNPHEA</sequence>
<organism>
    <name type="scientific">Saccharomyces cerevisiae (strain ATCC 204508 / S288c)</name>
    <name type="common">Baker's yeast</name>
    <dbReference type="NCBI Taxonomy" id="559292"/>
    <lineage>
        <taxon>Eukaryota</taxon>
        <taxon>Fungi</taxon>
        <taxon>Dikarya</taxon>
        <taxon>Ascomycota</taxon>
        <taxon>Saccharomycotina</taxon>
        <taxon>Saccharomycetes</taxon>
        <taxon>Saccharomycetales</taxon>
        <taxon>Saccharomycetaceae</taxon>
        <taxon>Saccharomyces</taxon>
    </lineage>
</organism>
<feature type="chain" id="PRO_0000127161" description="Centromere-binding protein 1">
    <location>
        <begin position="1"/>
        <end position="351"/>
    </location>
</feature>
<feature type="domain" description="bHLH" evidence="1">
    <location>
        <begin position="222"/>
        <end position="270"/>
    </location>
</feature>
<feature type="region of interest" description="Disordered" evidence="2">
    <location>
        <begin position="1"/>
        <end position="164"/>
    </location>
</feature>
<feature type="region of interest" description="Disordered" evidence="2">
    <location>
        <begin position="196"/>
        <end position="233"/>
    </location>
</feature>
<feature type="region of interest" description="Disordered" evidence="2">
    <location>
        <begin position="327"/>
        <end position="351"/>
    </location>
</feature>
<feature type="compositionally biased region" description="Polar residues" evidence="2">
    <location>
        <begin position="1"/>
        <end position="10"/>
    </location>
</feature>
<feature type="compositionally biased region" description="Polar residues" evidence="2">
    <location>
        <begin position="43"/>
        <end position="52"/>
    </location>
</feature>
<feature type="compositionally biased region" description="Polar residues" evidence="2">
    <location>
        <begin position="65"/>
        <end position="77"/>
    </location>
</feature>
<feature type="compositionally biased region" description="Polar residues" evidence="2">
    <location>
        <begin position="100"/>
        <end position="124"/>
    </location>
</feature>
<feature type="compositionally biased region" description="Polar residues" evidence="2">
    <location>
        <begin position="138"/>
        <end position="164"/>
    </location>
</feature>
<feature type="modified residue" description="N-acetylmethionine" evidence="14">
    <location>
        <position position="1"/>
    </location>
</feature>
<feature type="modified residue" description="Phosphoserine; by ATM or ATR" evidence="12 13">
    <location>
        <position position="45"/>
    </location>
</feature>
<feature type="modified residue" description="Phosphoserine" evidence="12 13">
    <location>
        <position position="48"/>
    </location>
</feature>
<feature type="modified residue" description="Phosphoserine" evidence="12">
    <location>
        <position position="84"/>
    </location>
</feature>
<feature type="modified residue" description="Phosphothreonine" evidence="11 13">
    <location>
        <position position="138"/>
    </location>
</feature>
<feature type="sequence conflict" description="In Ref. 2; CAA36382." evidence="10" ref="2">
    <original>V</original>
    <variation>F</variation>
    <location>
        <position position="144"/>
    </location>
</feature>
<feature type="sequence conflict" description="In Ref. 7; AAS56245." evidence="10" ref="7">
    <original>M</original>
    <variation>T</variation>
    <location>
        <position position="168"/>
    </location>
</feature>
<feature type="sequence conflict" description="In Ref. 1, 2 and 3." evidence="10" ref="1 2 3">
    <original>C</original>
    <variation>R</variation>
    <location>
        <position position="262"/>
    </location>
</feature>
<feature type="helix" evidence="15">
    <location>
        <begin position="224"/>
        <end position="248"/>
    </location>
</feature>
<feature type="strand" evidence="16">
    <location>
        <begin position="249"/>
        <end position="251"/>
    </location>
</feature>
<feature type="helix" evidence="15">
    <location>
        <begin position="256"/>
        <end position="287"/>
    </location>
</feature>
<keyword id="KW-0002">3D-structure</keyword>
<keyword id="KW-0007">Acetylation</keyword>
<keyword id="KW-0137">Centromere</keyword>
<keyword id="KW-0158">Chromosome</keyword>
<keyword id="KW-0903">Direct protein sequencing</keyword>
<keyword id="KW-0238">DNA-binding</keyword>
<keyword id="KW-0496">Mitochondrion</keyword>
<keyword id="KW-0539">Nucleus</keyword>
<keyword id="KW-0597">Phosphoprotein</keyword>
<keyword id="KW-1185">Reference proteome</keyword>
<keyword id="KW-0804">Transcription</keyword>
<keyword id="KW-0805">Transcription regulation</keyword>
<comment type="function">
    <text evidence="6 8">Required for chromosome stability and methionine prototrophy. It is involved in chromosomal segregation. Binds to a highly conserved DNA sequence (5'-RTCACRTG-3'), called CDEI, found in centromeres and in several promoters. DNA-binding activity is enhanced by MET28. Required as an auxiliary factor for transcriptional activation of sulfur metabolism together with MET4 and MET28.</text>
</comment>
<comment type="subunit">
    <text evidence="9">Binds DNA as a dimer. Associates with MET4 to form a heteromeric complex which also includes MET28.</text>
</comment>
<comment type="subcellular location">
    <subcellularLocation>
        <location evidence="3">Nucleus</location>
    </subcellularLocation>
    <subcellularLocation>
        <location evidence="5">Mitochondrion</location>
    </subcellularLocation>
    <subcellularLocation>
        <location evidence="7">Chromosome</location>
        <location evidence="7">Centromere</location>
    </subcellularLocation>
</comment>
<comment type="miscellaneous">
    <text evidence="4">Present with 6890 molecules/cell in log phase SD medium.</text>
</comment>
<accession>P17106</accession>
<accession>D6VWN1</accession>
<accession>P17623</accession>
<accession>Q6Q5N1</accession>